<evidence type="ECO:0000255" key="1">
    <source>
        <dbReference type="HAMAP-Rule" id="MF_00508"/>
    </source>
</evidence>
<evidence type="ECO:0000305" key="2"/>
<protein>
    <recommendedName>
        <fullName evidence="1">Small ribosomal subunit protein uS10</fullName>
    </recommendedName>
    <alternativeName>
        <fullName evidence="2">30S ribosomal protein S10</fullName>
    </alternativeName>
</protein>
<reference key="1">
    <citation type="journal article" date="2004" name="Nature">
        <title>Genome sequence of Silicibacter pomeroyi reveals adaptations to the marine environment.</title>
        <authorList>
            <person name="Moran M.A."/>
            <person name="Buchan A."/>
            <person name="Gonzalez J.M."/>
            <person name="Heidelberg J.F."/>
            <person name="Whitman W.B."/>
            <person name="Kiene R.P."/>
            <person name="Henriksen J.R."/>
            <person name="King G.M."/>
            <person name="Belas R."/>
            <person name="Fuqua C."/>
            <person name="Brinkac L.M."/>
            <person name="Lewis M."/>
            <person name="Johri S."/>
            <person name="Weaver B."/>
            <person name="Pai G."/>
            <person name="Eisen J.A."/>
            <person name="Rahe E."/>
            <person name="Sheldon W.M."/>
            <person name="Ye W."/>
            <person name="Miller T.R."/>
            <person name="Carlton J."/>
            <person name="Rasko D.A."/>
            <person name="Paulsen I.T."/>
            <person name="Ren Q."/>
            <person name="Daugherty S.C."/>
            <person name="DeBoy R.T."/>
            <person name="Dodson R.J."/>
            <person name="Durkin A.S."/>
            <person name="Madupu R."/>
            <person name="Nelson W.C."/>
            <person name="Sullivan S.A."/>
            <person name="Rosovitz M.J."/>
            <person name="Haft D.H."/>
            <person name="Selengut J."/>
            <person name="Ward N."/>
        </authorList>
    </citation>
    <scope>NUCLEOTIDE SEQUENCE [LARGE SCALE GENOMIC DNA]</scope>
    <source>
        <strain>ATCC 700808 / DSM 15171 / DSS-3</strain>
    </source>
</reference>
<reference key="2">
    <citation type="journal article" date="2014" name="Stand. Genomic Sci.">
        <title>An updated genome annotation for the model marine bacterium Ruegeria pomeroyi DSS-3.</title>
        <authorList>
            <person name="Rivers A.R."/>
            <person name="Smith C.B."/>
            <person name="Moran M.A."/>
        </authorList>
    </citation>
    <scope>GENOME REANNOTATION</scope>
    <source>
        <strain>ATCC 700808 / DSM 15171 / DSS-3</strain>
    </source>
</reference>
<feature type="chain" id="PRO_0000237096" description="Small ribosomal subunit protein uS10">
    <location>
        <begin position="1"/>
        <end position="104"/>
    </location>
</feature>
<sequence length="104" mass="11804">MQSQNIRIRLKAFDYRVLDASTQEIVNTAKRTGAQVRGPIPLPNKIEKFTVLRGPHVDKKSRDQFEIRTHKRLLDIVDPTPQTVDALMKLDLAAGVDVEIKLQS</sequence>
<accession>Q5LLU5</accession>
<gene>
    <name evidence="1" type="primary">rpsJ</name>
    <name type="ordered locus">SPO3826</name>
</gene>
<organism>
    <name type="scientific">Ruegeria pomeroyi (strain ATCC 700808 / DSM 15171 / DSS-3)</name>
    <name type="common">Silicibacter pomeroyi</name>
    <dbReference type="NCBI Taxonomy" id="246200"/>
    <lineage>
        <taxon>Bacteria</taxon>
        <taxon>Pseudomonadati</taxon>
        <taxon>Pseudomonadota</taxon>
        <taxon>Alphaproteobacteria</taxon>
        <taxon>Rhodobacterales</taxon>
        <taxon>Roseobacteraceae</taxon>
        <taxon>Ruegeria</taxon>
    </lineage>
</organism>
<dbReference type="EMBL" id="CP000031">
    <property type="protein sequence ID" value="AAV97040.1"/>
    <property type="molecule type" value="Genomic_DNA"/>
</dbReference>
<dbReference type="RefSeq" id="WP_005621947.1">
    <property type="nucleotide sequence ID" value="NC_003911.12"/>
</dbReference>
<dbReference type="SMR" id="Q5LLU5"/>
<dbReference type="STRING" id="246200.SPO3826"/>
<dbReference type="PaxDb" id="246200-SPO3826"/>
<dbReference type="GeneID" id="28248356"/>
<dbReference type="KEGG" id="sil:SPO3826"/>
<dbReference type="eggNOG" id="COG0051">
    <property type="taxonomic scope" value="Bacteria"/>
</dbReference>
<dbReference type="HOGENOM" id="CLU_122625_1_3_5"/>
<dbReference type="OrthoDB" id="9804464at2"/>
<dbReference type="Proteomes" id="UP000001023">
    <property type="component" value="Chromosome"/>
</dbReference>
<dbReference type="GO" id="GO:1990904">
    <property type="term" value="C:ribonucleoprotein complex"/>
    <property type="evidence" value="ECO:0007669"/>
    <property type="project" value="UniProtKB-KW"/>
</dbReference>
<dbReference type="GO" id="GO:0005840">
    <property type="term" value="C:ribosome"/>
    <property type="evidence" value="ECO:0007669"/>
    <property type="project" value="UniProtKB-KW"/>
</dbReference>
<dbReference type="GO" id="GO:0003735">
    <property type="term" value="F:structural constituent of ribosome"/>
    <property type="evidence" value="ECO:0007669"/>
    <property type="project" value="InterPro"/>
</dbReference>
<dbReference type="GO" id="GO:0000049">
    <property type="term" value="F:tRNA binding"/>
    <property type="evidence" value="ECO:0007669"/>
    <property type="project" value="UniProtKB-UniRule"/>
</dbReference>
<dbReference type="GO" id="GO:0006412">
    <property type="term" value="P:translation"/>
    <property type="evidence" value="ECO:0007669"/>
    <property type="project" value="UniProtKB-UniRule"/>
</dbReference>
<dbReference type="FunFam" id="3.30.70.600:FF:000001">
    <property type="entry name" value="30S ribosomal protein S10"/>
    <property type="match status" value="1"/>
</dbReference>
<dbReference type="Gene3D" id="3.30.70.600">
    <property type="entry name" value="Ribosomal protein S10 domain"/>
    <property type="match status" value="1"/>
</dbReference>
<dbReference type="HAMAP" id="MF_00508">
    <property type="entry name" value="Ribosomal_uS10"/>
    <property type="match status" value="1"/>
</dbReference>
<dbReference type="InterPro" id="IPR001848">
    <property type="entry name" value="Ribosomal_uS10"/>
</dbReference>
<dbReference type="InterPro" id="IPR027486">
    <property type="entry name" value="Ribosomal_uS10_dom"/>
</dbReference>
<dbReference type="InterPro" id="IPR036838">
    <property type="entry name" value="Ribosomal_uS10_dom_sf"/>
</dbReference>
<dbReference type="NCBIfam" id="NF001861">
    <property type="entry name" value="PRK00596.1"/>
    <property type="match status" value="1"/>
</dbReference>
<dbReference type="NCBIfam" id="TIGR01049">
    <property type="entry name" value="rpsJ_bact"/>
    <property type="match status" value="1"/>
</dbReference>
<dbReference type="PANTHER" id="PTHR11700">
    <property type="entry name" value="30S RIBOSOMAL PROTEIN S10 FAMILY MEMBER"/>
    <property type="match status" value="1"/>
</dbReference>
<dbReference type="Pfam" id="PF00338">
    <property type="entry name" value="Ribosomal_S10"/>
    <property type="match status" value="1"/>
</dbReference>
<dbReference type="PRINTS" id="PR00971">
    <property type="entry name" value="RIBOSOMALS10"/>
</dbReference>
<dbReference type="SMART" id="SM01403">
    <property type="entry name" value="Ribosomal_S10"/>
    <property type="match status" value="1"/>
</dbReference>
<dbReference type="SUPFAM" id="SSF54999">
    <property type="entry name" value="Ribosomal protein S10"/>
    <property type="match status" value="1"/>
</dbReference>
<proteinExistence type="inferred from homology"/>
<keyword id="KW-1185">Reference proteome</keyword>
<keyword id="KW-0687">Ribonucleoprotein</keyword>
<keyword id="KW-0689">Ribosomal protein</keyword>
<name>RS10_RUEPO</name>
<comment type="function">
    <text evidence="1">Involved in the binding of tRNA to the ribosomes.</text>
</comment>
<comment type="subunit">
    <text evidence="1">Part of the 30S ribosomal subunit.</text>
</comment>
<comment type="similarity">
    <text evidence="1">Belongs to the universal ribosomal protein uS10 family.</text>
</comment>